<gene>
    <name type="ordered locus">At4g14190</name>
    <name type="ORF">dl3135c</name>
    <name type="ORF">FCAALL.115</name>
</gene>
<organism>
    <name type="scientific">Arabidopsis thaliana</name>
    <name type="common">Mouse-ear cress</name>
    <dbReference type="NCBI Taxonomy" id="3702"/>
    <lineage>
        <taxon>Eukaryota</taxon>
        <taxon>Viridiplantae</taxon>
        <taxon>Streptophyta</taxon>
        <taxon>Embryophyta</taxon>
        <taxon>Tracheophyta</taxon>
        <taxon>Spermatophyta</taxon>
        <taxon>Magnoliopsida</taxon>
        <taxon>eudicotyledons</taxon>
        <taxon>Gunneridae</taxon>
        <taxon>Pentapetalae</taxon>
        <taxon>rosids</taxon>
        <taxon>malvids</taxon>
        <taxon>Brassicales</taxon>
        <taxon>Brassicaceae</taxon>
        <taxon>Camelineae</taxon>
        <taxon>Arabidopsis</taxon>
    </lineage>
</organism>
<reference key="1">
    <citation type="journal article" date="1998" name="Nature">
        <title>Analysis of 1.9 Mb of contiguous sequence from chromosome 4 of Arabidopsis thaliana.</title>
        <authorList>
            <person name="Bevan M."/>
            <person name="Bancroft I."/>
            <person name="Bent E."/>
            <person name="Love K."/>
            <person name="Goodman H.M."/>
            <person name="Dean C."/>
            <person name="Bergkamp R."/>
            <person name="Dirkse W."/>
            <person name="van Staveren M."/>
            <person name="Stiekema W."/>
            <person name="Drost L."/>
            <person name="Ridley P."/>
            <person name="Hudson S.-A."/>
            <person name="Patel K."/>
            <person name="Murphy G."/>
            <person name="Piffanelli P."/>
            <person name="Wedler H."/>
            <person name="Wedler E."/>
            <person name="Wambutt R."/>
            <person name="Weitzenegger T."/>
            <person name="Pohl T."/>
            <person name="Terryn N."/>
            <person name="Gielen J."/>
            <person name="Villarroel R."/>
            <person name="De Clercq R."/>
            <person name="van Montagu M."/>
            <person name="Lecharny A."/>
            <person name="Aubourg S."/>
            <person name="Gy I."/>
            <person name="Kreis M."/>
            <person name="Lao N."/>
            <person name="Kavanagh T."/>
            <person name="Hempel S."/>
            <person name="Kotter P."/>
            <person name="Entian K.-D."/>
            <person name="Rieger M."/>
            <person name="Schaefer M."/>
            <person name="Funk B."/>
            <person name="Mueller-Auer S."/>
            <person name="Silvey M."/>
            <person name="James R."/>
            <person name="Monfort A."/>
            <person name="Pons A."/>
            <person name="Puigdomenech P."/>
            <person name="Douka A."/>
            <person name="Voukelatou E."/>
            <person name="Milioni D."/>
            <person name="Hatzopoulos P."/>
            <person name="Piravandi E."/>
            <person name="Obermaier B."/>
            <person name="Hilbert H."/>
            <person name="Duesterhoeft A."/>
            <person name="Moores T."/>
            <person name="Jones J.D.G."/>
            <person name="Eneva T."/>
            <person name="Palme K."/>
            <person name="Benes V."/>
            <person name="Rechmann S."/>
            <person name="Ansorge W."/>
            <person name="Cooke R."/>
            <person name="Berger C."/>
            <person name="Delseny M."/>
            <person name="Voet M."/>
            <person name="Volckaert G."/>
            <person name="Mewes H.-W."/>
            <person name="Klosterman S."/>
            <person name="Schueller C."/>
            <person name="Chalwatzis N."/>
        </authorList>
    </citation>
    <scope>NUCLEOTIDE SEQUENCE [LARGE SCALE GENOMIC DNA]</scope>
    <source>
        <strain>cv. Columbia</strain>
    </source>
</reference>
<reference key="2">
    <citation type="journal article" date="1999" name="Nature">
        <title>Sequence and analysis of chromosome 4 of the plant Arabidopsis thaliana.</title>
        <authorList>
            <person name="Mayer K.F.X."/>
            <person name="Schueller C."/>
            <person name="Wambutt R."/>
            <person name="Murphy G."/>
            <person name="Volckaert G."/>
            <person name="Pohl T."/>
            <person name="Duesterhoeft A."/>
            <person name="Stiekema W."/>
            <person name="Entian K.-D."/>
            <person name="Terryn N."/>
            <person name="Harris B."/>
            <person name="Ansorge W."/>
            <person name="Brandt P."/>
            <person name="Grivell L.A."/>
            <person name="Rieger M."/>
            <person name="Weichselgartner M."/>
            <person name="de Simone V."/>
            <person name="Obermaier B."/>
            <person name="Mache R."/>
            <person name="Mueller M."/>
            <person name="Kreis M."/>
            <person name="Delseny M."/>
            <person name="Puigdomenech P."/>
            <person name="Watson M."/>
            <person name="Schmidtheini T."/>
            <person name="Reichert B."/>
            <person name="Portetelle D."/>
            <person name="Perez-Alonso M."/>
            <person name="Boutry M."/>
            <person name="Bancroft I."/>
            <person name="Vos P."/>
            <person name="Hoheisel J."/>
            <person name="Zimmermann W."/>
            <person name="Wedler H."/>
            <person name="Ridley P."/>
            <person name="Langham S.-A."/>
            <person name="McCullagh B."/>
            <person name="Bilham L."/>
            <person name="Robben J."/>
            <person name="van der Schueren J."/>
            <person name="Grymonprez B."/>
            <person name="Chuang Y.-J."/>
            <person name="Vandenbussche F."/>
            <person name="Braeken M."/>
            <person name="Weltjens I."/>
            <person name="Voet M."/>
            <person name="Bastiaens I."/>
            <person name="Aert R."/>
            <person name="Defoor E."/>
            <person name="Weitzenegger T."/>
            <person name="Bothe G."/>
            <person name="Ramsperger U."/>
            <person name="Hilbert H."/>
            <person name="Braun M."/>
            <person name="Holzer E."/>
            <person name="Brandt A."/>
            <person name="Peters S."/>
            <person name="van Staveren M."/>
            <person name="Dirkse W."/>
            <person name="Mooijman P."/>
            <person name="Klein Lankhorst R."/>
            <person name="Rose M."/>
            <person name="Hauf J."/>
            <person name="Koetter P."/>
            <person name="Berneiser S."/>
            <person name="Hempel S."/>
            <person name="Feldpausch M."/>
            <person name="Lamberth S."/>
            <person name="Van den Daele H."/>
            <person name="De Keyser A."/>
            <person name="Buysshaert C."/>
            <person name="Gielen J."/>
            <person name="Villarroel R."/>
            <person name="De Clercq R."/>
            <person name="van Montagu M."/>
            <person name="Rogers J."/>
            <person name="Cronin A."/>
            <person name="Quail M.A."/>
            <person name="Bray-Allen S."/>
            <person name="Clark L."/>
            <person name="Doggett J."/>
            <person name="Hall S."/>
            <person name="Kay M."/>
            <person name="Lennard N."/>
            <person name="McLay K."/>
            <person name="Mayes R."/>
            <person name="Pettett A."/>
            <person name="Rajandream M.A."/>
            <person name="Lyne M."/>
            <person name="Benes V."/>
            <person name="Rechmann S."/>
            <person name="Borkova D."/>
            <person name="Bloecker H."/>
            <person name="Scharfe M."/>
            <person name="Grimm M."/>
            <person name="Loehnert T.-H."/>
            <person name="Dose S."/>
            <person name="de Haan M."/>
            <person name="Maarse A.C."/>
            <person name="Schaefer M."/>
            <person name="Mueller-Auer S."/>
            <person name="Gabel C."/>
            <person name="Fuchs M."/>
            <person name="Fartmann B."/>
            <person name="Granderath K."/>
            <person name="Dauner D."/>
            <person name="Herzl A."/>
            <person name="Neumann S."/>
            <person name="Argiriou A."/>
            <person name="Vitale D."/>
            <person name="Liguori R."/>
            <person name="Piravandi E."/>
            <person name="Massenet O."/>
            <person name="Quigley F."/>
            <person name="Clabauld G."/>
            <person name="Muendlein A."/>
            <person name="Felber R."/>
            <person name="Schnabl S."/>
            <person name="Hiller R."/>
            <person name="Schmidt W."/>
            <person name="Lecharny A."/>
            <person name="Aubourg S."/>
            <person name="Chefdor F."/>
            <person name="Cooke R."/>
            <person name="Berger C."/>
            <person name="Monfort A."/>
            <person name="Casacuberta E."/>
            <person name="Gibbons T."/>
            <person name="Weber N."/>
            <person name="Vandenbol M."/>
            <person name="Bargues M."/>
            <person name="Terol J."/>
            <person name="Torres A."/>
            <person name="Perez-Perez A."/>
            <person name="Purnelle B."/>
            <person name="Bent E."/>
            <person name="Johnson S."/>
            <person name="Tacon D."/>
            <person name="Jesse T."/>
            <person name="Heijnen L."/>
            <person name="Schwarz S."/>
            <person name="Scholler P."/>
            <person name="Heber S."/>
            <person name="Francs P."/>
            <person name="Bielke C."/>
            <person name="Frishman D."/>
            <person name="Haase D."/>
            <person name="Lemcke K."/>
            <person name="Mewes H.-W."/>
            <person name="Stocker S."/>
            <person name="Zaccaria P."/>
            <person name="Bevan M."/>
            <person name="Wilson R.K."/>
            <person name="de la Bastide M."/>
            <person name="Habermann K."/>
            <person name="Parnell L."/>
            <person name="Dedhia N."/>
            <person name="Gnoj L."/>
            <person name="Schutz K."/>
            <person name="Huang E."/>
            <person name="Spiegel L."/>
            <person name="Sekhon M."/>
            <person name="Murray J."/>
            <person name="Sheet P."/>
            <person name="Cordes M."/>
            <person name="Abu-Threideh J."/>
            <person name="Stoneking T."/>
            <person name="Kalicki J."/>
            <person name="Graves T."/>
            <person name="Harmon G."/>
            <person name="Edwards J."/>
            <person name="Latreille P."/>
            <person name="Courtney L."/>
            <person name="Cloud J."/>
            <person name="Abbott A."/>
            <person name="Scott K."/>
            <person name="Johnson D."/>
            <person name="Minx P."/>
            <person name="Bentley D."/>
            <person name="Fulton B."/>
            <person name="Miller N."/>
            <person name="Greco T."/>
            <person name="Kemp K."/>
            <person name="Kramer J."/>
            <person name="Fulton L."/>
            <person name="Mardis E."/>
            <person name="Dante M."/>
            <person name="Pepin K."/>
            <person name="Hillier L.W."/>
            <person name="Nelson J."/>
            <person name="Spieth J."/>
            <person name="Ryan E."/>
            <person name="Andrews S."/>
            <person name="Geisel C."/>
            <person name="Layman D."/>
            <person name="Du H."/>
            <person name="Ali J."/>
            <person name="Berghoff A."/>
            <person name="Jones K."/>
            <person name="Drone K."/>
            <person name="Cotton M."/>
            <person name="Joshu C."/>
            <person name="Antonoiu B."/>
            <person name="Zidanic M."/>
            <person name="Strong C."/>
            <person name="Sun H."/>
            <person name="Lamar B."/>
            <person name="Yordan C."/>
            <person name="Ma P."/>
            <person name="Zhong J."/>
            <person name="Preston R."/>
            <person name="Vil D."/>
            <person name="Shekher M."/>
            <person name="Matero A."/>
            <person name="Shah R."/>
            <person name="Swaby I.K."/>
            <person name="O'Shaughnessy A."/>
            <person name="Rodriguez M."/>
            <person name="Hoffman J."/>
            <person name="Till S."/>
            <person name="Granat S."/>
            <person name="Shohdy N."/>
            <person name="Hasegawa A."/>
            <person name="Hameed A."/>
            <person name="Lodhi M."/>
            <person name="Johnson A."/>
            <person name="Chen E."/>
            <person name="Marra M.A."/>
            <person name="Martienssen R."/>
            <person name="McCombie W.R."/>
        </authorList>
    </citation>
    <scope>NUCLEOTIDE SEQUENCE [LARGE SCALE GENOMIC DNA]</scope>
    <source>
        <strain>cv. Columbia</strain>
    </source>
</reference>
<reference key="3">
    <citation type="journal article" date="2017" name="Plant J.">
        <title>Araport11: a complete reannotation of the Arabidopsis thaliana reference genome.</title>
        <authorList>
            <person name="Cheng C.Y."/>
            <person name="Krishnakumar V."/>
            <person name="Chan A.P."/>
            <person name="Thibaud-Nissen F."/>
            <person name="Schobel S."/>
            <person name="Town C.D."/>
        </authorList>
    </citation>
    <scope>GENOME REANNOTATION</scope>
    <source>
        <strain>cv. Columbia</strain>
    </source>
</reference>
<reference key="4">
    <citation type="journal article" date="2004" name="Genome Res.">
        <title>Whole genome sequence comparisons and 'full-length' cDNA sequences: a combined approach to evaluate and improve Arabidopsis genome annotation.</title>
        <authorList>
            <person name="Castelli V."/>
            <person name="Aury J.-M."/>
            <person name="Jaillon O."/>
            <person name="Wincker P."/>
            <person name="Clepet C."/>
            <person name="Menard M."/>
            <person name="Cruaud C."/>
            <person name="Quetier F."/>
            <person name="Scarpelli C."/>
            <person name="Schaechter V."/>
            <person name="Temple G."/>
            <person name="Caboche M."/>
            <person name="Weissenbach J."/>
            <person name="Salanoubat M."/>
        </authorList>
    </citation>
    <scope>NUCLEOTIDE SEQUENCE [LARGE SCALE MRNA] OF 5-501</scope>
    <source>
        <strain>cv. Columbia</strain>
    </source>
</reference>
<reference key="5">
    <citation type="journal article" date="2004" name="Plant Cell">
        <title>Genome-wide analysis of Arabidopsis pentatricopeptide repeat proteins reveals their essential role in organelle biogenesis.</title>
        <authorList>
            <person name="Lurin C."/>
            <person name="Andres C."/>
            <person name="Aubourg S."/>
            <person name="Bellaoui M."/>
            <person name="Bitton F."/>
            <person name="Bruyere C."/>
            <person name="Caboche M."/>
            <person name="Debast C."/>
            <person name="Gualberto J."/>
            <person name="Hoffmann B."/>
            <person name="Lecharny A."/>
            <person name="Le Ret M."/>
            <person name="Martin-Magniette M.-L."/>
            <person name="Mireau H."/>
            <person name="Peeters N."/>
            <person name="Renou J.-P."/>
            <person name="Szurek B."/>
            <person name="Taconnat L."/>
            <person name="Small I."/>
        </authorList>
    </citation>
    <scope>GENE FAMILY</scope>
</reference>
<dbReference type="EMBL" id="Z97335">
    <property type="protein sequence ID" value="CAB10198.1"/>
    <property type="status" value="ALT_SEQ"/>
    <property type="molecule type" value="Genomic_DNA"/>
</dbReference>
<dbReference type="EMBL" id="AL161538">
    <property type="protein sequence ID" value="CAB78461.1"/>
    <property type="status" value="ALT_SEQ"/>
    <property type="molecule type" value="Genomic_DNA"/>
</dbReference>
<dbReference type="EMBL" id="CP002687">
    <property type="protein sequence ID" value="AEE83391.1"/>
    <property type="molecule type" value="Genomic_DNA"/>
</dbReference>
<dbReference type="EMBL" id="BX827455">
    <property type="status" value="NOT_ANNOTATED_CDS"/>
    <property type="molecule type" value="mRNA"/>
</dbReference>
<dbReference type="PIR" id="D71403">
    <property type="entry name" value="D71403"/>
</dbReference>
<dbReference type="RefSeq" id="NP_193155.4">
    <property type="nucleotide sequence ID" value="NM_117496.6"/>
</dbReference>
<dbReference type="SMR" id="O23278"/>
<dbReference type="FunCoup" id="O23278">
    <property type="interactions" value="46"/>
</dbReference>
<dbReference type="STRING" id="3702.O23278"/>
<dbReference type="iPTMnet" id="O23278"/>
<dbReference type="PaxDb" id="3702-AT4G14190.1"/>
<dbReference type="ProteomicsDB" id="249219"/>
<dbReference type="EnsemblPlants" id="AT4G14190.1">
    <property type="protein sequence ID" value="AT4G14190.1"/>
    <property type="gene ID" value="AT4G14190"/>
</dbReference>
<dbReference type="GeneID" id="827059"/>
<dbReference type="Gramene" id="AT4G14190.1">
    <property type="protein sequence ID" value="AT4G14190.1"/>
    <property type="gene ID" value="AT4G14190"/>
</dbReference>
<dbReference type="KEGG" id="ath:AT4G14190"/>
<dbReference type="Araport" id="AT4G14190"/>
<dbReference type="TAIR" id="AT4G14190"/>
<dbReference type="eggNOG" id="KOG4197">
    <property type="taxonomic scope" value="Eukaryota"/>
</dbReference>
<dbReference type="HOGENOM" id="CLU_539020_0_0_1"/>
<dbReference type="InParanoid" id="O23278"/>
<dbReference type="OMA" id="HFWAVIR"/>
<dbReference type="PhylomeDB" id="O23278"/>
<dbReference type="PRO" id="PR:O23278"/>
<dbReference type="Proteomes" id="UP000006548">
    <property type="component" value="Chromosome 4"/>
</dbReference>
<dbReference type="ExpressionAtlas" id="O23278">
    <property type="expression patterns" value="baseline and differential"/>
</dbReference>
<dbReference type="GO" id="GO:0009507">
    <property type="term" value="C:chloroplast"/>
    <property type="evidence" value="ECO:0007669"/>
    <property type="project" value="UniProtKB-SubCell"/>
</dbReference>
<dbReference type="Gene3D" id="1.25.40.10">
    <property type="entry name" value="Tetratricopeptide repeat domain"/>
    <property type="match status" value="2"/>
</dbReference>
<dbReference type="InterPro" id="IPR002885">
    <property type="entry name" value="Pentatricopeptide_rpt"/>
</dbReference>
<dbReference type="InterPro" id="IPR011990">
    <property type="entry name" value="TPR-like_helical_dom_sf"/>
</dbReference>
<dbReference type="NCBIfam" id="TIGR00756">
    <property type="entry name" value="PPR"/>
    <property type="match status" value="3"/>
</dbReference>
<dbReference type="PANTHER" id="PTHR47493">
    <property type="entry name" value="OS08G0520200 PROTEIN"/>
    <property type="match status" value="1"/>
</dbReference>
<dbReference type="PANTHER" id="PTHR47493:SF3">
    <property type="entry name" value="PENTACOTRIPEPTIDE-REPEAT REGION OF PRORP DOMAIN-CONTAINING PROTEIN"/>
    <property type="match status" value="1"/>
</dbReference>
<dbReference type="Pfam" id="PF01535">
    <property type="entry name" value="PPR"/>
    <property type="match status" value="2"/>
</dbReference>
<dbReference type="Pfam" id="PF13041">
    <property type="entry name" value="PPR_2"/>
    <property type="match status" value="1"/>
</dbReference>
<dbReference type="PROSITE" id="PS51375">
    <property type="entry name" value="PPR"/>
    <property type="match status" value="6"/>
</dbReference>
<protein>
    <recommendedName>
        <fullName>Pentatricopeptide repeat-containing protein At4g14190, chloroplastic</fullName>
    </recommendedName>
</protein>
<name>PP310_ARATH</name>
<sequence>MENLTTAQFLHRATLLKKPPPPPWNLNSSFLTSTSYSIPRPSSLRRSLPLSINGDATQPTSLLHHHRFLSSLTRRLSLSGSCPLRLLQEDGDWSKDHFWAVIRFLRQSSRLHEILPVFDTWKNLEPSRISENNYERIIRFLCEEKSMSEAIRAFRSMIDDHELSPSLEIYNSIIHSYADDGKFEEAMFYLNHMKENGLLPITETYDGLIEAYGKWKMYDEIVLCLKRMESDGCVRDHVTYNLLIREFSRGGLLKRMEQMYQSLMSRKMTLEPSTLLSMLEAYAEFGLIEKMEETCNKIIRFGISLDEGLVRKLANVYIENLMFSRLDDLGRGISASRTRRTELAWCLRLLCHARLVSRKGLDYVVKEMEEARVPWNTTFANIALLAYSKMGDFTSIELLLSELRIKHVKLDLVTVGIVFDLSEARFDGTGVFMTWKKIGFLDKPVEMKTDPLVHAAFGKGQFLRSCEEVKNQSLGTRDGESKSWTYQYLMELVVKNQKTVP</sequence>
<keyword id="KW-0150">Chloroplast</keyword>
<keyword id="KW-0934">Plastid</keyword>
<keyword id="KW-1185">Reference proteome</keyword>
<keyword id="KW-0677">Repeat</keyword>
<keyword id="KW-0809">Transit peptide</keyword>
<feature type="transit peptide" description="Chloroplast" evidence="1">
    <location>
        <begin position="1"/>
        <end position="88"/>
    </location>
</feature>
<feature type="chain" id="PRO_0000363428" description="Pentatricopeptide repeat-containing protein At4g14190, chloroplastic">
    <location>
        <begin position="89"/>
        <end position="501"/>
    </location>
</feature>
<feature type="repeat" description="PPR 1">
    <location>
        <begin position="130"/>
        <end position="160"/>
    </location>
</feature>
<feature type="repeat" description="PPR 2">
    <location>
        <begin position="166"/>
        <end position="200"/>
    </location>
</feature>
<feature type="repeat" description="PPR 3">
    <location>
        <begin position="201"/>
        <end position="235"/>
    </location>
</feature>
<feature type="repeat" description="PPR 4">
    <location>
        <begin position="236"/>
        <end position="270"/>
    </location>
</feature>
<feature type="repeat" description="PPR 5">
    <location>
        <begin position="271"/>
        <end position="305"/>
    </location>
</feature>
<feature type="sequence conflict" description="In Ref. 4." evidence="2" ref="4">
    <original>I</original>
    <variation>M</variation>
    <location>
        <position position="138"/>
    </location>
</feature>
<feature type="sequence conflict" description="In Ref. 4." evidence="2" ref="4">
    <original>N</original>
    <variation>D</variation>
    <location>
        <position position="241"/>
    </location>
</feature>
<feature type="sequence conflict" description="In Ref. 4." evidence="2" ref="4">
    <original>V</original>
    <variation>A</variation>
    <location>
        <position position="431"/>
    </location>
</feature>
<evidence type="ECO:0000255" key="1"/>
<evidence type="ECO:0000305" key="2"/>
<comment type="subcellular location">
    <subcellularLocation>
        <location evidence="2">Plastid</location>
        <location evidence="2">Chloroplast</location>
    </subcellularLocation>
</comment>
<comment type="similarity">
    <text evidence="2">Belongs to the PPR family. P subfamily.</text>
</comment>
<comment type="sequence caution" evidence="2">
    <conflict type="erroneous gene model prediction">
        <sequence resource="EMBL-CDS" id="CAB10198"/>
    </conflict>
</comment>
<comment type="sequence caution" evidence="2">
    <conflict type="erroneous gene model prediction">
        <sequence resource="EMBL-CDS" id="CAB78461"/>
    </conflict>
</comment>
<comment type="online information" name="Pentatricopeptide repeat proteins">
    <link uri="https://ppr.plantenergy.uwa.edu.au"/>
</comment>
<accession>O23278</accession>
<proteinExistence type="evidence at transcript level"/>